<sequence>MFRFVGRSGFALRGSLQLRKDVLRSRTTAVAKRHYSSSNGNNGGGFSSAILSVLGGSLIGGGFVAYALGSQFEKEKSVSDLSIARLEDLDSPEYCDKETFAKALVELKDVLENDPENFTVAKDDLDAHSDTYFNSHHAEANQRPEIVLYPRNTEDVSKLLKICHKYSIPVIPFSGGTSLEGHFLPTRPGSCVVLDISKYLNKIIQLNKEDLDVVVQGGVPWEELNEYLNDHGLLFGCDPGPGAQIAGCIANSCSGTNAYRYGTMKENVVNITMCMADGTIVKTKRRPRKSSAGYNLNGLIIGSEGTLGIVTEATIKCHVRSTFETVAVVPFPTVSDAASCSSHLIQAGIQLNAMELLDDNMMKIINQSGATSKDNWVESPTLFFKIGGRSEQIIQEVIKEVEKIASQHNNTKFEFATDEDSKLELWEARKVALWSTIDTGRKTNPDANIWTTDVAVPISKFADVINATKEEMNASGLLTSLVGHAGDGNFHAFIIYNTEQRKTAETIVENMVKRAIDAEGTCTGEHGVGIGKRDYLLEEVGEDTVAVMRKLKLALDPKRILNPDKIFKIDPNDHQH</sequence>
<feature type="transit peptide" description="Mitochondrion">
    <location>
        <begin position="1"/>
        <end status="unknown"/>
    </location>
</feature>
<feature type="chain" id="PRO_0000020427" description="D-lactate dehydrogenase [cytochrome], mitochondrial">
    <location>
        <begin status="unknown"/>
        <end position="576"/>
    </location>
</feature>
<feature type="domain" description="FAD-binding PCMH-type" evidence="1">
    <location>
        <begin position="139"/>
        <end position="320"/>
    </location>
</feature>
<feature type="sequence conflict" description="In Ref. 1; CAA50635." evidence="2" ref="1">
    <original>E</original>
    <variation>Q</variation>
    <location>
        <position position="539"/>
    </location>
</feature>
<feature type="sequence conflict" description="In Ref. 1; CAA50635." evidence="2" ref="1">
    <original>D</original>
    <variation>DKIF</variation>
    <location>
        <position position="564"/>
    </location>
</feature>
<comment type="function">
    <text>Catalyzes the stereospecific oxidation of D-lactate to pyruvate.</text>
</comment>
<comment type="catalytic activity">
    <reaction>
        <text>(R)-lactate + 2 Fe(III)-[cytochrome c] = 2 Fe(II)-[cytochrome c] + pyruvate + 2 H(+)</text>
        <dbReference type="Rhea" id="RHEA:13521"/>
        <dbReference type="Rhea" id="RHEA-COMP:10350"/>
        <dbReference type="Rhea" id="RHEA-COMP:14399"/>
        <dbReference type="ChEBI" id="CHEBI:15361"/>
        <dbReference type="ChEBI" id="CHEBI:15378"/>
        <dbReference type="ChEBI" id="CHEBI:16004"/>
        <dbReference type="ChEBI" id="CHEBI:29033"/>
        <dbReference type="ChEBI" id="CHEBI:29034"/>
        <dbReference type="EC" id="1.1.2.4"/>
    </reaction>
</comment>
<comment type="cofactor">
    <cofactor>
        <name>FAD</name>
        <dbReference type="ChEBI" id="CHEBI:57692"/>
    </cofactor>
    <text>Binds 2 FAD.</text>
</comment>
<comment type="cofactor">
    <cofactor>
        <name>Zn(2+)</name>
        <dbReference type="ChEBI" id="CHEBI:29105"/>
    </cofactor>
    <text>Binds 4 to 6 Zn(2+) ions.</text>
</comment>
<comment type="subcellular location">
    <subcellularLocation>
        <location>Mitochondrion matrix</location>
    </subcellularLocation>
</comment>
<comment type="similarity">
    <text evidence="2">Belongs to the FAD-binding oxidoreductase/transferase type 4 family.</text>
</comment>
<dbReference type="EC" id="1.1.2.4"/>
<dbReference type="EMBL" id="X71628">
    <property type="protein sequence ID" value="CAA50635.1"/>
    <property type="molecule type" value="Genomic_DNA"/>
</dbReference>
<dbReference type="EMBL" id="CR382125">
    <property type="protein sequence ID" value="CAG99929.1"/>
    <property type="molecule type" value="Genomic_DNA"/>
</dbReference>
<dbReference type="PIR" id="S51528">
    <property type="entry name" value="S51528"/>
</dbReference>
<dbReference type="RefSeq" id="XP_454842.1">
    <property type="nucleotide sequence ID" value="XM_454842.1"/>
</dbReference>
<dbReference type="SMR" id="Q12627"/>
<dbReference type="FunCoup" id="Q12627">
    <property type="interactions" value="220"/>
</dbReference>
<dbReference type="STRING" id="284590.Q12627"/>
<dbReference type="PaxDb" id="284590-Q12627"/>
<dbReference type="KEGG" id="kla:KLLA0_E19691g"/>
<dbReference type="eggNOG" id="KOG1231">
    <property type="taxonomic scope" value="Eukaryota"/>
</dbReference>
<dbReference type="HOGENOM" id="CLU_017779_3_3_1"/>
<dbReference type="InParanoid" id="Q12627"/>
<dbReference type="OMA" id="GQGFEWA"/>
<dbReference type="Proteomes" id="UP000000598">
    <property type="component" value="Chromosome E"/>
</dbReference>
<dbReference type="GO" id="GO:0005759">
    <property type="term" value="C:mitochondrial matrix"/>
    <property type="evidence" value="ECO:0007669"/>
    <property type="project" value="UniProtKB-SubCell"/>
</dbReference>
<dbReference type="GO" id="GO:0004458">
    <property type="term" value="F:D-lactate dehydrogenase (cytochrome) activity"/>
    <property type="evidence" value="ECO:0007669"/>
    <property type="project" value="UniProtKB-EC"/>
</dbReference>
<dbReference type="GO" id="GO:0008720">
    <property type="term" value="F:D-lactate dehydrogenase activity"/>
    <property type="evidence" value="ECO:0007669"/>
    <property type="project" value="TreeGrafter"/>
</dbReference>
<dbReference type="GO" id="GO:0071949">
    <property type="term" value="F:FAD binding"/>
    <property type="evidence" value="ECO:0007669"/>
    <property type="project" value="InterPro"/>
</dbReference>
<dbReference type="GO" id="GO:1903457">
    <property type="term" value="P:lactate catabolic process"/>
    <property type="evidence" value="ECO:0007669"/>
    <property type="project" value="TreeGrafter"/>
</dbReference>
<dbReference type="FunFam" id="3.30.465.10:FF:000038">
    <property type="entry name" value="D-lactate dehydrogenase"/>
    <property type="match status" value="1"/>
</dbReference>
<dbReference type="FunFam" id="1.10.45.10:FF:000001">
    <property type="entry name" value="D-lactate dehydrogenase mitochondrial"/>
    <property type="match status" value="1"/>
</dbReference>
<dbReference type="FunFam" id="3.30.70.2740:FF:000001">
    <property type="entry name" value="D-lactate dehydrogenase mitochondrial"/>
    <property type="match status" value="1"/>
</dbReference>
<dbReference type="Gene3D" id="3.30.465.10">
    <property type="match status" value="1"/>
</dbReference>
<dbReference type="Gene3D" id="3.30.70.2740">
    <property type="match status" value="1"/>
</dbReference>
<dbReference type="Gene3D" id="1.10.45.10">
    <property type="entry name" value="Vanillyl-alcohol Oxidase, Chain A, domain 4"/>
    <property type="match status" value="1"/>
</dbReference>
<dbReference type="InterPro" id="IPR004113">
    <property type="entry name" value="FAD-bd_oxidored_4_C"/>
</dbReference>
<dbReference type="InterPro" id="IPR016166">
    <property type="entry name" value="FAD-bd_PCMH"/>
</dbReference>
<dbReference type="InterPro" id="IPR036318">
    <property type="entry name" value="FAD-bd_PCMH-like_sf"/>
</dbReference>
<dbReference type="InterPro" id="IPR016169">
    <property type="entry name" value="FAD-bd_PCMH_sub2"/>
</dbReference>
<dbReference type="InterPro" id="IPR016164">
    <property type="entry name" value="FAD-linked_Oxase-like_C"/>
</dbReference>
<dbReference type="InterPro" id="IPR006094">
    <property type="entry name" value="Oxid_FAD_bind_N"/>
</dbReference>
<dbReference type="InterPro" id="IPR016171">
    <property type="entry name" value="Vanillyl_alc_oxidase_C-sub2"/>
</dbReference>
<dbReference type="PANTHER" id="PTHR11748">
    <property type="entry name" value="D-LACTATE DEHYDROGENASE"/>
    <property type="match status" value="1"/>
</dbReference>
<dbReference type="PANTHER" id="PTHR11748:SF111">
    <property type="entry name" value="D-LACTATE DEHYDROGENASE, MITOCHONDRIAL-RELATED"/>
    <property type="match status" value="1"/>
</dbReference>
<dbReference type="Pfam" id="PF02913">
    <property type="entry name" value="FAD-oxidase_C"/>
    <property type="match status" value="1"/>
</dbReference>
<dbReference type="Pfam" id="PF01565">
    <property type="entry name" value="FAD_binding_4"/>
    <property type="match status" value="1"/>
</dbReference>
<dbReference type="SUPFAM" id="SSF56176">
    <property type="entry name" value="FAD-binding/transporter-associated domain-like"/>
    <property type="match status" value="1"/>
</dbReference>
<dbReference type="SUPFAM" id="SSF55103">
    <property type="entry name" value="FAD-linked oxidases, C-terminal domain"/>
    <property type="match status" value="1"/>
</dbReference>
<dbReference type="PROSITE" id="PS51387">
    <property type="entry name" value="FAD_PCMH"/>
    <property type="match status" value="1"/>
</dbReference>
<keyword id="KW-0274">FAD</keyword>
<keyword id="KW-0285">Flavoprotein</keyword>
<keyword id="KW-0496">Mitochondrion</keyword>
<keyword id="KW-0560">Oxidoreductase</keyword>
<keyword id="KW-1185">Reference proteome</keyword>
<keyword id="KW-0809">Transit peptide</keyword>
<keyword id="KW-0862">Zinc</keyword>
<protein>
    <recommendedName>
        <fullName>D-lactate dehydrogenase [cytochrome], mitochondrial</fullName>
        <ecNumber>1.1.2.4</ecNumber>
    </recommendedName>
    <alternativeName>
        <fullName>D-lactate ferricytochrome C oxidoreductase</fullName>
        <shortName>D-LCR</shortName>
    </alternativeName>
</protein>
<gene>
    <name type="primary">DLD1</name>
    <name type="synonym">DLD</name>
    <name type="ordered locus">KLLA0E19789g</name>
</gene>
<name>DLD1_KLULA</name>
<accession>Q12627</accession>
<accession>Q6CMJ7</accession>
<organism>
    <name type="scientific">Kluyveromyces lactis (strain ATCC 8585 / CBS 2359 / DSM 70799 / NBRC 1267 / NRRL Y-1140 / WM37)</name>
    <name type="common">Yeast</name>
    <name type="synonym">Candida sphaerica</name>
    <dbReference type="NCBI Taxonomy" id="284590"/>
    <lineage>
        <taxon>Eukaryota</taxon>
        <taxon>Fungi</taxon>
        <taxon>Dikarya</taxon>
        <taxon>Ascomycota</taxon>
        <taxon>Saccharomycotina</taxon>
        <taxon>Saccharomycetes</taxon>
        <taxon>Saccharomycetales</taxon>
        <taxon>Saccharomycetaceae</taxon>
        <taxon>Kluyveromyces</taxon>
    </lineage>
</organism>
<proteinExistence type="inferred from homology"/>
<evidence type="ECO:0000255" key="1">
    <source>
        <dbReference type="PROSITE-ProRule" id="PRU00718"/>
    </source>
</evidence>
<evidence type="ECO:0000305" key="2"/>
<reference key="1">
    <citation type="journal article" date="1994" name="Mol. Gen. Genet.">
        <title>Carbon catabolite repression in Kluyveromyces lactis: isolation and characterization of the KIDLD gene encoding the mitochondrial enzyme D-lactate ferricytochrome c oxidoreductase.</title>
        <authorList>
            <person name="Lodi T."/>
            <person name="O'Connor D."/>
            <person name="Goffrini P."/>
            <person name="Ferrero I."/>
        </authorList>
    </citation>
    <scope>NUCLEOTIDE SEQUENCE [GENOMIC DNA]</scope>
    <source>
        <strain>ATCC 8585 / CBS 2359 / DSM 70799 / NBRC 1267 / NRRL Y-1140 / WM37</strain>
    </source>
</reference>
<reference key="2">
    <citation type="journal article" date="2004" name="Nature">
        <title>Genome evolution in yeasts.</title>
        <authorList>
            <person name="Dujon B."/>
            <person name="Sherman D."/>
            <person name="Fischer G."/>
            <person name="Durrens P."/>
            <person name="Casaregola S."/>
            <person name="Lafontaine I."/>
            <person name="de Montigny J."/>
            <person name="Marck C."/>
            <person name="Neuveglise C."/>
            <person name="Talla E."/>
            <person name="Goffard N."/>
            <person name="Frangeul L."/>
            <person name="Aigle M."/>
            <person name="Anthouard V."/>
            <person name="Babour A."/>
            <person name="Barbe V."/>
            <person name="Barnay S."/>
            <person name="Blanchin S."/>
            <person name="Beckerich J.-M."/>
            <person name="Beyne E."/>
            <person name="Bleykasten C."/>
            <person name="Boisrame A."/>
            <person name="Boyer J."/>
            <person name="Cattolico L."/>
            <person name="Confanioleri F."/>
            <person name="de Daruvar A."/>
            <person name="Despons L."/>
            <person name="Fabre E."/>
            <person name="Fairhead C."/>
            <person name="Ferry-Dumazet H."/>
            <person name="Groppi A."/>
            <person name="Hantraye F."/>
            <person name="Hennequin C."/>
            <person name="Jauniaux N."/>
            <person name="Joyet P."/>
            <person name="Kachouri R."/>
            <person name="Kerrest A."/>
            <person name="Koszul R."/>
            <person name="Lemaire M."/>
            <person name="Lesur I."/>
            <person name="Ma L."/>
            <person name="Muller H."/>
            <person name="Nicaud J.-M."/>
            <person name="Nikolski M."/>
            <person name="Oztas S."/>
            <person name="Ozier-Kalogeropoulos O."/>
            <person name="Pellenz S."/>
            <person name="Potier S."/>
            <person name="Richard G.-F."/>
            <person name="Straub M.-L."/>
            <person name="Suleau A."/>
            <person name="Swennen D."/>
            <person name="Tekaia F."/>
            <person name="Wesolowski-Louvel M."/>
            <person name="Westhof E."/>
            <person name="Wirth B."/>
            <person name="Zeniou-Meyer M."/>
            <person name="Zivanovic Y."/>
            <person name="Bolotin-Fukuhara M."/>
            <person name="Thierry A."/>
            <person name="Bouchier C."/>
            <person name="Caudron B."/>
            <person name="Scarpelli C."/>
            <person name="Gaillardin C."/>
            <person name="Weissenbach J."/>
            <person name="Wincker P."/>
            <person name="Souciet J.-L."/>
        </authorList>
    </citation>
    <scope>NUCLEOTIDE SEQUENCE [LARGE SCALE GENOMIC DNA]</scope>
    <source>
        <strain>ATCC 8585 / CBS 2359 / DSM 70799 / NBRC 1267 / NRRL Y-1140 / WM37</strain>
    </source>
</reference>